<evidence type="ECO:0000250" key="1"/>
<evidence type="ECO:0000256" key="2">
    <source>
        <dbReference type="SAM" id="MobiDB-lite"/>
    </source>
</evidence>
<evidence type="ECO:0000269" key="3">
    <source>
    </source>
</evidence>
<evidence type="ECO:0000269" key="4">
    <source>
    </source>
</evidence>
<evidence type="ECO:0000305" key="5"/>
<protein>
    <recommendedName>
        <fullName>Probable choline-phosphate cytidylyltransferase</fullName>
        <ecNumber>2.7.7.15</ecNumber>
    </recommendedName>
    <alternativeName>
        <fullName>CTP:phosphocholine cytidylyltransferase</fullName>
        <shortName>CCT</shortName>
        <shortName>CT</shortName>
    </alternativeName>
    <alternativeName>
        <fullName>Phosphorylcholine transferase</fullName>
    </alternativeName>
</protein>
<name>PCY1_SCHPO</name>
<reference key="1">
    <citation type="journal article" date="2002" name="Nature">
        <title>The genome sequence of Schizosaccharomyces pombe.</title>
        <authorList>
            <person name="Wood V."/>
            <person name="Gwilliam R."/>
            <person name="Rajandream M.A."/>
            <person name="Lyne M.H."/>
            <person name="Lyne R."/>
            <person name="Stewart A."/>
            <person name="Sgouros J.G."/>
            <person name="Peat N."/>
            <person name="Hayles J."/>
            <person name="Baker S.G."/>
            <person name="Basham D."/>
            <person name="Bowman S."/>
            <person name="Brooks K."/>
            <person name="Brown D."/>
            <person name="Brown S."/>
            <person name="Chillingworth T."/>
            <person name="Churcher C.M."/>
            <person name="Collins M."/>
            <person name="Connor R."/>
            <person name="Cronin A."/>
            <person name="Davis P."/>
            <person name="Feltwell T."/>
            <person name="Fraser A."/>
            <person name="Gentles S."/>
            <person name="Goble A."/>
            <person name="Hamlin N."/>
            <person name="Harris D.E."/>
            <person name="Hidalgo J."/>
            <person name="Hodgson G."/>
            <person name="Holroyd S."/>
            <person name="Hornsby T."/>
            <person name="Howarth S."/>
            <person name="Huckle E.J."/>
            <person name="Hunt S."/>
            <person name="Jagels K."/>
            <person name="James K.D."/>
            <person name="Jones L."/>
            <person name="Jones M."/>
            <person name="Leather S."/>
            <person name="McDonald S."/>
            <person name="McLean J."/>
            <person name="Mooney P."/>
            <person name="Moule S."/>
            <person name="Mungall K.L."/>
            <person name="Murphy L.D."/>
            <person name="Niblett D."/>
            <person name="Odell C."/>
            <person name="Oliver K."/>
            <person name="O'Neil S."/>
            <person name="Pearson D."/>
            <person name="Quail M.A."/>
            <person name="Rabbinowitsch E."/>
            <person name="Rutherford K.M."/>
            <person name="Rutter S."/>
            <person name="Saunders D."/>
            <person name="Seeger K."/>
            <person name="Sharp S."/>
            <person name="Skelton J."/>
            <person name="Simmonds M.N."/>
            <person name="Squares R."/>
            <person name="Squares S."/>
            <person name="Stevens K."/>
            <person name="Taylor K."/>
            <person name="Taylor R.G."/>
            <person name="Tivey A."/>
            <person name="Walsh S.V."/>
            <person name="Warren T."/>
            <person name="Whitehead S."/>
            <person name="Woodward J.R."/>
            <person name="Volckaert G."/>
            <person name="Aert R."/>
            <person name="Robben J."/>
            <person name="Grymonprez B."/>
            <person name="Weltjens I."/>
            <person name="Vanstreels E."/>
            <person name="Rieger M."/>
            <person name="Schaefer M."/>
            <person name="Mueller-Auer S."/>
            <person name="Gabel C."/>
            <person name="Fuchs M."/>
            <person name="Duesterhoeft A."/>
            <person name="Fritzc C."/>
            <person name="Holzer E."/>
            <person name="Moestl D."/>
            <person name="Hilbert H."/>
            <person name="Borzym K."/>
            <person name="Langer I."/>
            <person name="Beck A."/>
            <person name="Lehrach H."/>
            <person name="Reinhardt R."/>
            <person name="Pohl T.M."/>
            <person name="Eger P."/>
            <person name="Zimmermann W."/>
            <person name="Wedler H."/>
            <person name="Wambutt R."/>
            <person name="Purnelle B."/>
            <person name="Goffeau A."/>
            <person name="Cadieu E."/>
            <person name="Dreano S."/>
            <person name="Gloux S."/>
            <person name="Lelaure V."/>
            <person name="Mottier S."/>
            <person name="Galibert F."/>
            <person name="Aves S.J."/>
            <person name="Xiang Z."/>
            <person name="Hunt C."/>
            <person name="Moore K."/>
            <person name="Hurst S.M."/>
            <person name="Lucas M."/>
            <person name="Rochet M."/>
            <person name="Gaillardin C."/>
            <person name="Tallada V.A."/>
            <person name="Garzon A."/>
            <person name="Thode G."/>
            <person name="Daga R.R."/>
            <person name="Cruzado L."/>
            <person name="Jimenez J."/>
            <person name="Sanchez M."/>
            <person name="del Rey F."/>
            <person name="Benito J."/>
            <person name="Dominguez A."/>
            <person name="Revuelta J.L."/>
            <person name="Moreno S."/>
            <person name="Armstrong J."/>
            <person name="Forsburg S.L."/>
            <person name="Cerutti L."/>
            <person name="Lowe T."/>
            <person name="McCombie W.R."/>
            <person name="Paulsen I."/>
            <person name="Potashkin J."/>
            <person name="Shpakovski G.V."/>
            <person name="Ussery D."/>
            <person name="Barrell B.G."/>
            <person name="Nurse P."/>
        </authorList>
    </citation>
    <scope>NUCLEOTIDE SEQUENCE [LARGE SCALE GENOMIC DNA]</scope>
    <source>
        <strain>972 / ATCC 24843</strain>
    </source>
</reference>
<reference key="2">
    <citation type="journal article" date="2006" name="Nat. Biotechnol.">
        <title>ORFeome cloning and global analysis of protein localization in the fission yeast Schizosaccharomyces pombe.</title>
        <authorList>
            <person name="Matsuyama A."/>
            <person name="Arai R."/>
            <person name="Yashiroda Y."/>
            <person name="Shirai A."/>
            <person name="Kamata A."/>
            <person name="Sekido S."/>
            <person name="Kobayashi Y."/>
            <person name="Hashimoto A."/>
            <person name="Hamamoto M."/>
            <person name="Hiraoka Y."/>
            <person name="Horinouchi S."/>
            <person name="Yoshida M."/>
        </authorList>
    </citation>
    <scope>SUBCELLULAR LOCATION [LARGE SCALE ANALYSIS]</scope>
</reference>
<reference key="3">
    <citation type="journal article" date="2008" name="J. Proteome Res.">
        <title>Phosphoproteome analysis of fission yeast.</title>
        <authorList>
            <person name="Wilson-Grady J.T."/>
            <person name="Villen J."/>
            <person name="Gygi S.P."/>
        </authorList>
    </citation>
    <scope>PHOSPHORYLATION [LARGE SCALE ANALYSIS] AT SER-315; SER-319; THR-323 AND SER-355</scope>
    <scope>IDENTIFICATION BY MASS SPECTROMETRY</scope>
</reference>
<gene>
    <name type="ORF">SPCC1827.02c</name>
</gene>
<sequence>MGEEGIKINDTHKRRIDEVEPSEKEDNVERQTKKYNFEIDEPEEQEKKDEKEDDKEESPSKSLEEISQSVSPVEEEPRDVRFKELSTPFSYPINDPPEGRPVRVYADGVFDLFHIGHMRQLEQAKKVFPNVHLIVGLPNDQLTHRLKGLTVMNDKERAEALRHCKWVDEVLENAPWVITPEFLEEHKIDFVAHDDIPYASDDSGDIYLPVKKVGKFIPTKRTEGVSTSDLITRIIRDYDQYVMRNLARGVNRKELNVSLFKKNELDLRHHIKVLRDTLRNHWVSTTRDLKADIKSFLSMATTDYQLQKNPLHGSSEPSSPGPTGFLGGINRWMQRRSSSHYDLPRVGNEIAASSSSATEENH</sequence>
<feature type="chain" id="PRO_0000316623" description="Probable choline-phosphate cytidylyltransferase">
    <location>
        <begin position="1"/>
        <end position="362"/>
    </location>
</feature>
<feature type="region of interest" description="Disordered" evidence="2">
    <location>
        <begin position="1"/>
        <end position="79"/>
    </location>
</feature>
<feature type="region of interest" description="Disordered" evidence="2">
    <location>
        <begin position="308"/>
        <end position="362"/>
    </location>
</feature>
<feature type="compositionally biased region" description="Basic and acidic residues" evidence="2">
    <location>
        <begin position="1"/>
        <end position="37"/>
    </location>
</feature>
<feature type="compositionally biased region" description="Low complexity" evidence="2">
    <location>
        <begin position="313"/>
        <end position="323"/>
    </location>
</feature>
<feature type="compositionally biased region" description="Low complexity" evidence="2">
    <location>
        <begin position="351"/>
        <end position="362"/>
    </location>
</feature>
<feature type="binding site" evidence="1">
    <location>
        <begin position="109"/>
        <end position="117"/>
    </location>
    <ligand>
        <name>CTP</name>
        <dbReference type="ChEBI" id="CHEBI:37563"/>
    </ligand>
</feature>
<feature type="binding site" evidence="1">
    <location>
        <position position="147"/>
    </location>
    <ligand>
        <name>CTP</name>
        <dbReference type="ChEBI" id="CHEBI:37563"/>
    </ligand>
</feature>
<feature type="binding site" evidence="1">
    <location>
        <position position="147"/>
    </location>
    <ligand>
        <name>substrate</name>
    </ligand>
</feature>
<feature type="binding site" evidence="1">
    <location>
        <position position="176"/>
    </location>
    <ligand>
        <name>substrate</name>
    </ligand>
</feature>
<feature type="binding site" evidence="1">
    <location>
        <begin position="193"/>
        <end position="194"/>
    </location>
    <ligand>
        <name>CTP</name>
        <dbReference type="ChEBI" id="CHEBI:37563"/>
    </ligand>
</feature>
<feature type="binding site" evidence="1">
    <location>
        <position position="198"/>
    </location>
    <ligand>
        <name>CTP</name>
        <dbReference type="ChEBI" id="CHEBI:37563"/>
    </ligand>
</feature>
<feature type="binding site" evidence="1">
    <location>
        <begin position="221"/>
        <end position="225"/>
    </location>
    <ligand>
        <name>CTP</name>
        <dbReference type="ChEBI" id="CHEBI:37563"/>
    </ligand>
</feature>
<feature type="modified residue" description="Phosphoserine" evidence="4">
    <location>
        <position position="315"/>
    </location>
</feature>
<feature type="modified residue" description="Phosphoserine" evidence="4">
    <location>
        <position position="319"/>
    </location>
</feature>
<feature type="modified residue" description="Phosphothreonine" evidence="4">
    <location>
        <position position="323"/>
    </location>
</feature>
<feature type="modified residue" description="Phosphoserine" evidence="4">
    <location>
        <position position="355"/>
    </location>
</feature>
<comment type="catalytic activity">
    <reaction>
        <text>phosphocholine + CTP + H(+) = CDP-choline + diphosphate</text>
        <dbReference type="Rhea" id="RHEA:18997"/>
        <dbReference type="ChEBI" id="CHEBI:15378"/>
        <dbReference type="ChEBI" id="CHEBI:33019"/>
        <dbReference type="ChEBI" id="CHEBI:37563"/>
        <dbReference type="ChEBI" id="CHEBI:58779"/>
        <dbReference type="ChEBI" id="CHEBI:295975"/>
        <dbReference type="EC" id="2.7.7.15"/>
    </reaction>
</comment>
<comment type="subcellular location">
    <subcellularLocation>
        <location evidence="3">Nucleus</location>
    </subcellularLocation>
</comment>
<comment type="similarity">
    <text evidence="5">Belongs to the cytidylyltransferase family.</text>
</comment>
<accession>O74975</accession>
<keyword id="KW-0444">Lipid biosynthesis</keyword>
<keyword id="KW-0443">Lipid metabolism</keyword>
<keyword id="KW-0548">Nucleotidyltransferase</keyword>
<keyword id="KW-0539">Nucleus</keyword>
<keyword id="KW-0594">Phospholipid biosynthesis</keyword>
<keyword id="KW-1208">Phospholipid metabolism</keyword>
<keyword id="KW-0597">Phosphoprotein</keyword>
<keyword id="KW-1185">Reference proteome</keyword>
<keyword id="KW-0808">Transferase</keyword>
<organism>
    <name type="scientific">Schizosaccharomyces pombe (strain 972 / ATCC 24843)</name>
    <name type="common">Fission yeast</name>
    <dbReference type="NCBI Taxonomy" id="284812"/>
    <lineage>
        <taxon>Eukaryota</taxon>
        <taxon>Fungi</taxon>
        <taxon>Dikarya</taxon>
        <taxon>Ascomycota</taxon>
        <taxon>Taphrinomycotina</taxon>
        <taxon>Schizosaccharomycetes</taxon>
        <taxon>Schizosaccharomycetales</taxon>
        <taxon>Schizosaccharomycetaceae</taxon>
        <taxon>Schizosaccharomyces</taxon>
    </lineage>
</organism>
<dbReference type="EC" id="2.7.7.15"/>
<dbReference type="EMBL" id="CU329672">
    <property type="protein sequence ID" value="CAA19310.3"/>
    <property type="molecule type" value="Genomic_DNA"/>
</dbReference>
<dbReference type="PIR" id="T41163">
    <property type="entry name" value="T41163"/>
</dbReference>
<dbReference type="SMR" id="O74975"/>
<dbReference type="BioGRID" id="275747">
    <property type="interactions" value="2"/>
</dbReference>
<dbReference type="FunCoup" id="O74975">
    <property type="interactions" value="279"/>
</dbReference>
<dbReference type="STRING" id="284812.O74975"/>
<dbReference type="iPTMnet" id="O74975"/>
<dbReference type="PaxDb" id="4896-SPCC1827.02c.1"/>
<dbReference type="EnsemblFungi" id="SPCC1827.02c.1">
    <property type="protein sequence ID" value="SPCC1827.02c.1:pep"/>
    <property type="gene ID" value="SPCC1827.02c"/>
</dbReference>
<dbReference type="KEGG" id="spo:2539176"/>
<dbReference type="PomBase" id="SPCC1827.02c"/>
<dbReference type="VEuPathDB" id="FungiDB:SPCC1827.02c"/>
<dbReference type="eggNOG" id="KOG2804">
    <property type="taxonomic scope" value="Eukaryota"/>
</dbReference>
<dbReference type="HOGENOM" id="CLU_034585_5_2_1"/>
<dbReference type="InParanoid" id="O74975"/>
<dbReference type="OMA" id="MATTDYQ"/>
<dbReference type="PhylomeDB" id="O74975"/>
<dbReference type="Reactome" id="R-SPO-1483191">
    <property type="pathway name" value="Synthesis of PC"/>
</dbReference>
<dbReference type="PRO" id="PR:O74975"/>
<dbReference type="Proteomes" id="UP000002485">
    <property type="component" value="Chromosome III"/>
</dbReference>
<dbReference type="GO" id="GO:0005635">
    <property type="term" value="C:nuclear envelope"/>
    <property type="evidence" value="ECO:0000318"/>
    <property type="project" value="GO_Central"/>
</dbReference>
<dbReference type="GO" id="GO:0005634">
    <property type="term" value="C:nucleus"/>
    <property type="evidence" value="ECO:0007005"/>
    <property type="project" value="PomBase"/>
</dbReference>
<dbReference type="GO" id="GO:0004105">
    <property type="term" value="F:choline-phosphate cytidylyltransferase activity"/>
    <property type="evidence" value="ECO:0000318"/>
    <property type="project" value="GO_Central"/>
</dbReference>
<dbReference type="GO" id="GO:0031210">
    <property type="term" value="F:phosphatidylcholine binding"/>
    <property type="evidence" value="ECO:0000318"/>
    <property type="project" value="GO_Central"/>
</dbReference>
<dbReference type="GO" id="GO:0006657">
    <property type="term" value="P:CDP-choline pathway"/>
    <property type="evidence" value="ECO:0000266"/>
    <property type="project" value="PomBase"/>
</dbReference>
<dbReference type="CDD" id="cd02174">
    <property type="entry name" value="CCT"/>
    <property type="match status" value="1"/>
</dbReference>
<dbReference type="FunFam" id="3.40.50.620:FF:000147">
    <property type="entry name" value="Cholinephosphate cytidylyltransferase"/>
    <property type="match status" value="1"/>
</dbReference>
<dbReference type="Gene3D" id="3.40.50.620">
    <property type="entry name" value="HUPs"/>
    <property type="match status" value="1"/>
</dbReference>
<dbReference type="InterPro" id="IPR041723">
    <property type="entry name" value="CCT"/>
</dbReference>
<dbReference type="InterPro" id="IPR004821">
    <property type="entry name" value="Cyt_trans-like"/>
</dbReference>
<dbReference type="InterPro" id="IPR045049">
    <property type="entry name" value="Pcy1-like"/>
</dbReference>
<dbReference type="InterPro" id="IPR014729">
    <property type="entry name" value="Rossmann-like_a/b/a_fold"/>
</dbReference>
<dbReference type="NCBIfam" id="TIGR00125">
    <property type="entry name" value="cyt_tran_rel"/>
    <property type="match status" value="1"/>
</dbReference>
<dbReference type="PANTHER" id="PTHR10739:SF13">
    <property type="entry name" value="CHOLINE-PHOSPHATE CYTIDYLYLTRANSFERASE"/>
    <property type="match status" value="1"/>
</dbReference>
<dbReference type="PANTHER" id="PTHR10739">
    <property type="entry name" value="CYTIDYLYLTRANSFERASE"/>
    <property type="match status" value="1"/>
</dbReference>
<dbReference type="Pfam" id="PF01467">
    <property type="entry name" value="CTP_transf_like"/>
    <property type="match status" value="1"/>
</dbReference>
<dbReference type="SUPFAM" id="SSF52374">
    <property type="entry name" value="Nucleotidylyl transferase"/>
    <property type="match status" value="1"/>
</dbReference>
<proteinExistence type="evidence at protein level"/>